<sequence>MNYYGNYYGGLGYGYGGFDDLGYGYGCGCGSFRRLGYGGGYGGYGYGSGFGGYGYRSCRPSCYGGYGFSGFY</sequence>
<proteinExistence type="evidence at protein level"/>
<accession>Q3LI72</accession>
<accession>A4IF22</accession>
<protein>
    <recommendedName>
        <fullName>Keratin-associated protein 19-5</fullName>
    </recommendedName>
</protein>
<comment type="function">
    <text>In the hair cortex, hair keratin intermediate filaments are embedded in an interfilamentous matrix, consisting of hair keratin-associated proteins (KRTAP), which are essential for the formation of a rigid and resistant hair shaft through their extensive disulfide bond cross-linking with abundant cysteine residues of hair keratins. The matrix proteins include the high-sulfur and high-glycine-tyrosine keratins.</text>
</comment>
<comment type="subunit">
    <text evidence="1">Interacts with hair keratins.</text>
</comment>
<comment type="interaction">
    <interactant intactId="EBI-1048945">
        <id>Q3LI72</id>
    </interactant>
    <interactant intactId="EBI-355540">
        <id>Q8IWG5</id>
        <label>ANKHD1</label>
    </interactant>
    <organismsDiffer>false</organismsDiffer>
    <experiments>3</experiments>
</comment>
<comment type="interaction">
    <interactant intactId="EBI-1048945">
        <id>Q3LI72</id>
    </interactant>
    <interactant intactId="EBI-12819523">
        <id>P41238</id>
        <label>APOBEC1</label>
    </interactant>
    <organismsDiffer>false</organismsDiffer>
    <experiments>3</experiments>
</comment>
<comment type="interaction">
    <interactant intactId="EBI-1048945">
        <id>Q3LI72</id>
    </interactant>
    <interactant intactId="EBI-948603">
        <id>Q03989</id>
        <label>ARID5A</label>
    </interactant>
    <organismsDiffer>false</organismsDiffer>
    <experiments>3</experiments>
</comment>
<comment type="interaction">
    <interactant intactId="EBI-1048945">
        <id>Q3LI72</id>
    </interactant>
    <interactant intactId="EBI-11954292">
        <id>Q86V38</id>
        <label>ATN1</label>
    </interactant>
    <organismsDiffer>false</organismsDiffer>
    <experiments>6</experiments>
</comment>
<comment type="interaction">
    <interactant intactId="EBI-1048945">
        <id>Q3LI72</id>
    </interactant>
    <interactant intactId="EBI-745689">
        <id>Q7L5A3</id>
        <label>ATOSB</label>
    </interactant>
    <organismsDiffer>false</organismsDiffer>
    <experiments>3</experiments>
</comment>
<comment type="interaction">
    <interactant intactId="EBI-1048945">
        <id>Q3LI72</id>
    </interactant>
    <interactant intactId="EBI-1166928">
        <id>Q8N5M1</id>
        <label>ATPAF2</label>
    </interactant>
    <organismsDiffer>false</organismsDiffer>
    <experiments>3</experiments>
</comment>
<comment type="interaction">
    <interactant intactId="EBI-1048945">
        <id>Q3LI72</id>
    </interactant>
    <interactant intactId="EBI-711810">
        <id>O14503</id>
        <label>BHLHE40</label>
    </interactant>
    <organismsDiffer>false</organismsDiffer>
    <experiments>3</experiments>
</comment>
<comment type="interaction">
    <interactant intactId="EBI-1048945">
        <id>Q3LI72</id>
    </interactant>
    <interactant intactId="EBI-1383687">
        <id>Q9UQM7</id>
        <label>CAMK2A</label>
    </interactant>
    <organismsDiffer>false</organismsDiffer>
    <experiments>3</experiments>
</comment>
<comment type="interaction">
    <interactant intactId="EBI-1048945">
        <id>Q3LI72</id>
    </interactant>
    <interactant intactId="EBI-1058722">
        <id>Q13554</id>
        <label>CAMK2B</label>
    </interactant>
    <organismsDiffer>false</organismsDiffer>
    <experiments>3</experiments>
</comment>
<comment type="interaction">
    <interactant intactId="EBI-1048945">
        <id>Q3LI72</id>
    </interactant>
    <interactant intactId="EBI-744545">
        <id>Q8NEC5</id>
        <label>CATSPER1</label>
    </interactant>
    <organismsDiffer>false</organismsDiffer>
    <experiments>3</experiments>
</comment>
<comment type="interaction">
    <interactant intactId="EBI-1048945">
        <id>Q3LI72</id>
    </interactant>
    <interactant intactId="EBI-12165781">
        <id>Q96LX7-5</id>
        <label>CCDC17</label>
    </interactant>
    <organismsDiffer>false</organismsDiffer>
    <experiments>3</experiments>
</comment>
<comment type="interaction">
    <interactant intactId="EBI-1048945">
        <id>Q3LI72</id>
    </interactant>
    <interactant intactId="EBI-12139335">
        <id>Q8N6W0</id>
        <label>CELF5</label>
    </interactant>
    <organismsDiffer>false</organismsDiffer>
    <experiments>3</experiments>
</comment>
<comment type="interaction">
    <interactant intactId="EBI-1048945">
        <id>Q3LI72</id>
    </interactant>
    <interactant intactId="EBI-947551">
        <id>Q9H2X0</id>
        <label>CHRD</label>
    </interactant>
    <organismsDiffer>false</organismsDiffer>
    <experiments>3</experiments>
</comment>
<comment type="interaction">
    <interactant intactId="EBI-1048945">
        <id>Q3LI72</id>
    </interactant>
    <interactant intactId="EBI-747133">
        <id>P27658</id>
        <label>COL8A1</label>
    </interactant>
    <organismsDiffer>false</organismsDiffer>
    <experiments>3</experiments>
</comment>
<comment type="interaction">
    <interactant intactId="EBI-1048945">
        <id>Q3LI72</id>
    </interactant>
    <interactant intactId="EBI-739773">
        <id>Q9BSW2</id>
        <label>CRACR2A</label>
    </interactant>
    <organismsDiffer>false</organismsDiffer>
    <experiments>3</experiments>
</comment>
<comment type="interaction">
    <interactant intactId="EBI-1048945">
        <id>Q3LI72</id>
    </interactant>
    <interactant intactId="EBI-10192698">
        <id>Q02930-3</id>
        <label>CREB5</label>
    </interactant>
    <organismsDiffer>false</organismsDiffer>
    <experiments>3</experiments>
</comment>
<comment type="interaction">
    <interactant intactId="EBI-1048945">
        <id>Q3LI72</id>
    </interactant>
    <interactant intactId="EBI-6875961">
        <id>P02489</id>
        <label>CRYAA</label>
    </interactant>
    <organismsDiffer>false</organismsDiffer>
    <experiments>3</experiments>
</comment>
<comment type="interaction">
    <interactant intactId="EBI-1048945">
        <id>Q3LI72</id>
    </interactant>
    <interactant intactId="EBI-3867333">
        <id>A8MQ03</id>
        <label>CYSRT1</label>
    </interactant>
    <organismsDiffer>false</organismsDiffer>
    <experiments>3</experiments>
</comment>
<comment type="interaction">
    <interactant intactId="EBI-1048945">
        <id>Q3LI72</id>
    </interactant>
    <interactant intactId="EBI-7875264">
        <id>O75553</id>
        <label>DAB1</label>
    </interactant>
    <organismsDiffer>false</organismsDiffer>
    <experiments>3</experiments>
</comment>
<comment type="interaction">
    <interactant intactId="EBI-1048945">
        <id>Q3LI72</id>
    </interactant>
    <interactant intactId="EBI-724310">
        <id>Q15038</id>
        <label>DAZAP2</label>
    </interactant>
    <organismsDiffer>false</organismsDiffer>
    <experiments>11</experiments>
</comment>
<comment type="interaction">
    <interactant intactId="EBI-1048945">
        <id>Q3LI72</id>
    </interactant>
    <interactant intactId="EBI-9679045">
        <id>Q9NQL9</id>
        <label>DMRT3</label>
    </interactant>
    <organismsDiffer>false</organismsDiffer>
    <experiments>3</experiments>
</comment>
<comment type="interaction">
    <interactant intactId="EBI-1048945">
        <id>Q3LI72</id>
    </interactant>
    <interactant intactId="EBI-954466">
        <id>Q96MA1</id>
        <label>DMRTB1</label>
    </interactant>
    <organismsDiffer>false</organismsDiffer>
    <experiments>3</experiments>
</comment>
<comment type="interaction">
    <interactant intactId="EBI-1048945">
        <id>Q3LI72</id>
    </interactant>
    <interactant intactId="EBI-10968534">
        <id>P50570-2</id>
        <label>DNM2</label>
    </interactant>
    <organismsDiffer>false</organismsDiffer>
    <experiments>3</experiments>
</comment>
<comment type="interaction">
    <interactant intactId="EBI-1048945">
        <id>Q3LI72</id>
    </interactant>
    <interactant intactId="EBI-743414">
        <id>O95967</id>
        <label>EFEMP2</label>
    </interactant>
    <organismsDiffer>false</organismsDiffer>
    <experiments>3</experiments>
</comment>
<comment type="interaction">
    <interactant intactId="EBI-1048945">
        <id>Q3LI72</id>
    </interactant>
    <interactant intactId="EBI-744099">
        <id>Q9H0I2</id>
        <label>ENKD1</label>
    </interactant>
    <organismsDiffer>false</organismsDiffer>
    <experiments>3</experiments>
</comment>
<comment type="interaction">
    <interactant intactId="EBI-1048945">
        <id>Q3LI72</id>
    </interactant>
    <interactant intactId="EBI-10213520">
        <id>Q6NXG1</id>
        <label>ESRP1</label>
    </interactant>
    <organismsDiffer>false</organismsDiffer>
    <experiments>3</experiments>
</comment>
<comment type="interaction">
    <interactant intactId="EBI-1048945">
        <id>Q3LI72</id>
    </interactant>
    <interactant intactId="EBI-17280301">
        <id>Q03828</id>
        <label>EVX2</label>
    </interactant>
    <organismsDiffer>false</organismsDiffer>
    <experiments>3</experiments>
</comment>
<comment type="interaction">
    <interactant intactId="EBI-1048945">
        <id>Q3LI72</id>
    </interactant>
    <interactant intactId="EBI-11978259">
        <id>Q92567-2</id>
        <label>FAM168A</label>
    </interactant>
    <organismsDiffer>false</organismsDiffer>
    <experiments>3</experiments>
</comment>
<comment type="interaction">
    <interactant intactId="EBI-1048945">
        <id>Q3LI72</id>
    </interactant>
    <interactant intactId="EBI-348399">
        <id>P22607</id>
        <label>FGFR3</label>
    </interactant>
    <organismsDiffer>false</organismsDiffer>
    <experiments>3</experiments>
</comment>
<comment type="interaction">
    <interactant intactId="EBI-1048945">
        <id>Q3LI72</id>
    </interactant>
    <interactant intactId="EBI-852851">
        <id>P01100</id>
        <label>FOS</label>
    </interactant>
    <organismsDiffer>false</organismsDiffer>
    <experiments>3</experiments>
</comment>
<comment type="interaction">
    <interactant intactId="EBI-1048945">
        <id>Q3LI72</id>
    </interactant>
    <interactant intactId="EBI-7251368">
        <id>Q9BZE0</id>
        <label>GLIS2</label>
    </interactant>
    <organismsDiffer>false</organismsDiffer>
    <experiments>5</experiments>
</comment>
<comment type="interaction">
    <interactant intactId="EBI-1048945">
        <id>Q3LI72</id>
    </interactant>
    <interactant intactId="EBI-748515">
        <id>Q8IVS8</id>
        <label>GLYCTK</label>
    </interactant>
    <organismsDiffer>false</organismsDiffer>
    <experiments>3</experiments>
</comment>
<comment type="interaction">
    <interactant intactId="EBI-1048945">
        <id>Q3LI72</id>
    </interactant>
    <interactant intactId="EBI-751540">
        <id>O95872</id>
        <label>GPANK1</label>
    </interactant>
    <organismsDiffer>false</organismsDiffer>
    <experiments>3</experiments>
</comment>
<comment type="interaction">
    <interactant intactId="EBI-1048945">
        <id>Q3LI72</id>
    </interactant>
    <interactant intactId="EBI-401755">
        <id>P62993</id>
        <label>GRB2</label>
    </interactant>
    <organismsDiffer>false</organismsDiffer>
    <experiments>3</experiments>
</comment>
<comment type="interaction">
    <interactant intactId="EBI-1048945">
        <id>Q3LI72</id>
    </interactant>
    <interactant intactId="EBI-2832909">
        <id>Q7Z429</id>
        <label>GRINA</label>
    </interactant>
    <organismsDiffer>false</organismsDiffer>
    <experiments>3</experiments>
</comment>
<comment type="interaction">
    <interactant intactId="EBI-1048945">
        <id>Q3LI72</id>
    </interactant>
    <interactant intactId="EBI-351506">
        <id>P06396</id>
        <label>GSN</label>
    </interactant>
    <organismsDiffer>false</organismsDiffer>
    <experiments>3</experiments>
</comment>
<comment type="interaction">
    <interactant intactId="EBI-1048945">
        <id>Q3LI72</id>
    </interactant>
    <interactant intactId="EBI-11978177">
        <id>Q96NT3-2</id>
        <label>GUCD1</label>
    </interactant>
    <organismsDiffer>false</organismsDiffer>
    <experiments>3</experiments>
</comment>
<comment type="interaction">
    <interactant intactId="EBI-1048945">
        <id>Q3LI72</id>
    </interactant>
    <interactant intactId="EBI-11956675">
        <id>Q9GZV7</id>
        <label>HAPLN2</label>
    </interactant>
    <organismsDiffer>false</organismsDiffer>
    <experiments>3</experiments>
</comment>
<comment type="interaction">
    <interactant intactId="EBI-1048945">
        <id>Q3LI72</id>
    </interactant>
    <interactant intactId="EBI-10178933">
        <id>V9HW27</id>
        <label>HEL-S-101</label>
    </interactant>
    <organismsDiffer>false</organismsDiffer>
    <experiments>3</experiments>
</comment>
<comment type="interaction">
    <interactant intactId="EBI-1048945">
        <id>Q3LI72</id>
    </interactant>
    <interactant intactId="EBI-740220">
        <id>O14964</id>
        <label>HGS</label>
    </interactant>
    <organismsDiffer>false</organismsDiffer>
    <experiments>3</experiments>
</comment>
<comment type="interaction">
    <interactant intactId="EBI-1048945">
        <id>Q3LI72</id>
    </interactant>
    <interactant intactId="EBI-745290">
        <id>P17482</id>
        <label>HOXB9</label>
    </interactant>
    <organismsDiffer>false</organismsDiffer>
    <experiments>3</experiments>
</comment>
<comment type="interaction">
    <interactant intactId="EBI-1048945">
        <id>Q3LI72</id>
    </interactant>
    <interactant intactId="EBI-6509505">
        <id>Q0VD86</id>
        <label>INCA1</label>
    </interactant>
    <organismsDiffer>false</organismsDiffer>
    <experiments>5</experiments>
</comment>
<comment type="interaction">
    <interactant intactId="EBI-1048945">
        <id>Q3LI72</id>
    </interactant>
    <interactant intactId="EBI-14069005">
        <id>Q9BVG8-5</id>
        <label>KIFC3</label>
    </interactant>
    <organismsDiffer>false</organismsDiffer>
    <experiments>3</experiments>
</comment>
<comment type="interaction">
    <interactant intactId="EBI-1048945">
        <id>Q3LI72</id>
    </interactant>
    <interactant intactId="EBI-2432309">
        <id>Q92876</id>
        <label>KLK6</label>
    </interactant>
    <organismsDiffer>false</organismsDiffer>
    <experiments>3</experiments>
</comment>
<comment type="interaction">
    <interactant intactId="EBI-1048945">
        <id>Q3LI72</id>
    </interactant>
    <interactant intactId="EBI-10981970">
        <id>Q5T749</id>
        <label>KPRP</label>
    </interactant>
    <organismsDiffer>false</organismsDiffer>
    <experiments>3</experiments>
</comment>
<comment type="interaction">
    <interactant intactId="EBI-1048945">
        <id>Q3LI72</id>
    </interactant>
    <interactant intactId="EBI-1047093">
        <id>O76011</id>
        <label>KRT34</label>
    </interactant>
    <organismsDiffer>false</organismsDiffer>
    <experiments>3</experiments>
</comment>
<comment type="interaction">
    <interactant intactId="EBI-1048945">
        <id>Q3LI72</id>
    </interactant>
    <interactant intactId="EBI-10176396">
        <id>P60329</id>
        <label>KRTAP12-4</label>
    </interactant>
    <organismsDiffer>false</organismsDiffer>
    <experiments>3</experiments>
</comment>
<comment type="interaction">
    <interactant intactId="EBI-1048945">
        <id>Q3LI72</id>
    </interactant>
    <interactant intactId="EBI-11992140">
        <id>Q3LI76</id>
        <label>KRTAP15-1</label>
    </interactant>
    <organismsDiffer>false</organismsDiffer>
    <experiments>3</experiments>
</comment>
<comment type="interaction">
    <interactant intactId="EBI-1048945">
        <id>Q3LI72</id>
    </interactant>
    <interactant intactId="EBI-11962084">
        <id>Q3LI66</id>
        <label>KRTAP6-2</label>
    </interactant>
    <organismsDiffer>false</organismsDiffer>
    <experiments>3</experiments>
</comment>
<comment type="interaction">
    <interactant intactId="EBI-1048945">
        <id>Q3LI72</id>
    </interactant>
    <interactant intactId="EBI-22311199">
        <id>Q3LI67</id>
        <label>KRTAP6-3</label>
    </interactant>
    <organismsDiffer>false</organismsDiffer>
    <experiments>3</experiments>
</comment>
<comment type="interaction">
    <interactant intactId="EBI-1048945">
        <id>Q3LI72</id>
    </interactant>
    <interactant intactId="EBI-10261141">
        <id>Q8IUC2</id>
        <label>KRTAP8-1</label>
    </interactant>
    <organismsDiffer>false</organismsDiffer>
    <experiments>3</experiments>
</comment>
<comment type="interaction">
    <interactant intactId="EBI-1048945">
        <id>Q3LI72</id>
    </interactant>
    <interactant intactId="EBI-716006">
        <id>Q9Y5V3</id>
        <label>MAGED1</label>
    </interactant>
    <organismsDiffer>false</organismsDiffer>
    <experiments>9</experiments>
</comment>
<comment type="interaction">
    <interactant intactId="EBI-1048945">
        <id>Q3LI72</id>
    </interactant>
    <interactant intactId="EBI-741424">
        <id>Q8NDC0</id>
        <label>MAPK1IP1L</label>
    </interactant>
    <organismsDiffer>false</organismsDiffer>
    <experiments>3</experiments>
</comment>
<comment type="interaction">
    <interactant intactId="EBI-1048945">
        <id>Q3LI72</id>
    </interactant>
    <interactant intactId="EBI-5662487">
        <id>Q8TDC0</id>
        <label>MYOZ3</label>
    </interactant>
    <organismsDiffer>false</organismsDiffer>
    <experiments>3</experiments>
</comment>
<comment type="interaction">
    <interactant intactId="EBI-1048945">
        <id>Q3LI72</id>
    </interactant>
    <interactant intactId="EBI-2858213">
        <id>Q86VE0</id>
        <label>MYPOP</label>
    </interactant>
    <organismsDiffer>false</organismsDiffer>
    <experiments>3</experiments>
</comment>
<comment type="interaction">
    <interactant intactId="EBI-1048945">
        <id>Q3LI72</id>
    </interactant>
    <interactant intactId="EBI-536879">
        <id>O43482</id>
        <label>OIP5</label>
    </interactant>
    <organismsDiffer>false</organismsDiffer>
    <experiments>3</experiments>
</comment>
<comment type="interaction">
    <interactant intactId="EBI-1048945">
        <id>Q3LI72</id>
    </interactant>
    <interactant intactId="EBI-10225049">
        <id>Q7RTU3</id>
        <label>OLIG3</label>
    </interactant>
    <organismsDiffer>false</organismsDiffer>
    <experiments>3</experiments>
</comment>
<comment type="interaction">
    <interactant intactId="EBI-1048945">
        <id>Q3LI72</id>
    </interactant>
    <interactant intactId="EBI-12813389">
        <id>Q8TDS5</id>
        <label>OXER1</label>
    </interactant>
    <organismsDiffer>false</organismsDiffer>
    <experiments>3</experiments>
</comment>
<comment type="interaction">
    <interactant intactId="EBI-1048945">
        <id>Q3LI72</id>
    </interactant>
    <interactant intactId="EBI-10181968">
        <id>Q7Z4N8</id>
        <label>P4HA3</label>
    </interactant>
    <organismsDiffer>false</organismsDiffer>
    <experiments>3</experiments>
</comment>
<comment type="interaction">
    <interactant intactId="EBI-1048945">
        <id>Q3LI72</id>
    </interactant>
    <interactant intactId="EBI-11022007">
        <id>Q9HBE1-4</id>
        <label>PATZ1</label>
    </interactant>
    <organismsDiffer>false</organismsDiffer>
    <experiments>5</experiments>
</comment>
<comment type="interaction">
    <interactant intactId="EBI-1048945">
        <id>Q3LI72</id>
    </interactant>
    <interactant intactId="EBI-748265">
        <id>P78337</id>
        <label>PITX1</label>
    </interactant>
    <organismsDiffer>false</organismsDiffer>
    <experiments>3</experiments>
</comment>
<comment type="interaction">
    <interactant intactId="EBI-1048945">
        <id>Q3LI72</id>
    </interactant>
    <interactant intactId="EBI-12138495">
        <id>Q99697-2</id>
        <label>PITX2</label>
    </interactant>
    <organismsDiffer>false</organismsDiffer>
    <experiments>3</experiments>
</comment>
<comment type="interaction">
    <interactant intactId="EBI-1048945">
        <id>Q3LI72</id>
    </interactant>
    <interactant intactId="EBI-769257">
        <id>Q9NRQ2</id>
        <label>PLSCR4</label>
    </interactant>
    <organismsDiffer>false</organismsDiffer>
    <experiments>3</experiments>
</comment>
<comment type="interaction">
    <interactant intactId="EBI-1048945">
        <id>Q3LI72</id>
    </interactant>
    <interactant intactId="EBI-943588">
        <id>Q16633</id>
        <label>POU2AF1</label>
    </interactant>
    <organismsDiffer>false</organismsDiffer>
    <experiments>3</experiments>
</comment>
<comment type="interaction">
    <interactant intactId="EBI-1048945">
        <id>Q3LI72</id>
    </interactant>
    <interactant intactId="EBI-710402">
        <id>Q96I34</id>
        <label>PPP1R16A</label>
    </interactant>
    <organismsDiffer>false</organismsDiffer>
    <experiments>3</experiments>
</comment>
<comment type="interaction">
    <interactant intactId="EBI-1048945">
        <id>Q3LI72</id>
    </interactant>
    <interactant intactId="EBI-7428853">
        <id>Q9UGI9</id>
        <label>PRKAG3</label>
    </interactant>
    <organismsDiffer>false</organismsDiffer>
    <experiments>3</experiments>
</comment>
<comment type="interaction">
    <interactant intactId="EBI-1048945">
        <id>Q3LI72</id>
    </interactant>
    <interactant intactId="EBI-1567797">
        <id>Q8WWY3</id>
        <label>PRPF31</label>
    </interactant>
    <organismsDiffer>false</organismsDiffer>
    <experiments>3</experiments>
</comment>
<comment type="interaction">
    <interactant intactId="EBI-1048945">
        <id>Q3LI72</id>
    </interactant>
    <interactant intactId="EBI-740924">
        <id>Q9NZ81</id>
        <label>PRR13</label>
    </interactant>
    <organismsDiffer>false</organismsDiffer>
    <experiments>5</experiments>
</comment>
<comment type="interaction">
    <interactant intactId="EBI-1048945">
        <id>Q3LI72</id>
    </interactant>
    <interactant intactId="EBI-12754095">
        <id>P86480</id>
        <label>PRR20D</label>
    </interactant>
    <organismsDiffer>false</organismsDiffer>
    <experiments>3</experiments>
</comment>
<comment type="interaction">
    <interactant intactId="EBI-1048945">
        <id>Q3LI72</id>
    </interactant>
    <interactant intactId="EBI-348380">
        <id>P25788</id>
        <label>PSMA3</label>
    </interactant>
    <organismsDiffer>false</organismsDiffer>
    <experiments>3</experiments>
</comment>
<comment type="interaction">
    <interactant intactId="EBI-1048945">
        <id>Q3LI72</id>
    </interactant>
    <interactant intactId="EBI-359335">
        <id>P49721</id>
        <label>PSMB2</label>
    </interactant>
    <organismsDiffer>false</organismsDiffer>
    <experiments>3</experiments>
</comment>
<comment type="interaction">
    <interactant intactId="EBI-1048945">
        <id>Q3LI72</id>
    </interactant>
    <interactant intactId="EBI-603350">
        <id>P28070</id>
        <label>PSMB4</label>
    </interactant>
    <organismsDiffer>false</organismsDiffer>
    <experiments>3</experiments>
</comment>
<comment type="interaction">
    <interactant intactId="EBI-1048945">
        <id>Q3LI72</id>
    </interactant>
    <interactant intactId="EBI-740322">
        <id>Q93062</id>
        <label>RBPMS</label>
    </interactant>
    <organismsDiffer>false</organismsDiffer>
    <experiments>4</experiments>
</comment>
<comment type="interaction">
    <interactant intactId="EBI-1048945">
        <id>Q3LI72</id>
    </interactant>
    <interactant intactId="EBI-740343">
        <id>Q93062-3</id>
        <label>RBPMS</label>
    </interactant>
    <organismsDiffer>false</organismsDiffer>
    <experiments>6</experiments>
</comment>
<comment type="interaction">
    <interactant intactId="EBI-1048945">
        <id>Q3LI72</id>
    </interactant>
    <interactant intactId="EBI-11987469">
        <id>Q6ZRY4</id>
        <label>RBPMS2</label>
    </interactant>
    <organismsDiffer>false</organismsDiffer>
    <experiments>3</experiments>
</comment>
<comment type="interaction">
    <interactant intactId="EBI-1048945">
        <id>Q3LI72</id>
    </interactant>
    <interactant intactId="EBI-372094">
        <id>Q9BQY4</id>
        <label>RHOXF2</label>
    </interactant>
    <organismsDiffer>false</organismsDiffer>
    <experiments>6</experiments>
</comment>
<comment type="interaction">
    <interactant intactId="EBI-1048945">
        <id>Q3LI72</id>
    </interactant>
    <interactant intactId="EBI-2341200">
        <id>Q9H0F5</id>
        <label>RNF38</label>
    </interactant>
    <organismsDiffer>false</organismsDiffer>
    <experiments>3</experiments>
</comment>
<comment type="interaction">
    <interactant intactId="EBI-1048945">
        <id>Q3LI72</id>
    </interactant>
    <interactant intactId="EBI-2845060">
        <id>Q7L0R7</id>
        <label>RNF44</label>
    </interactant>
    <organismsDiffer>false</organismsDiffer>
    <experiments>3</experiments>
</comment>
<comment type="interaction">
    <interactant intactId="EBI-1048945">
        <id>Q3LI72</id>
    </interactant>
    <interactant intactId="EBI-10217913">
        <id>Q14D33</id>
        <label>RTP5</label>
    </interactant>
    <organismsDiffer>false</organismsDiffer>
    <experiments>3</experiments>
</comment>
<comment type="interaction">
    <interactant intactId="EBI-1048945">
        <id>Q3LI72</id>
    </interactant>
    <interactant intactId="EBI-6257312">
        <id>Q9BVN2</id>
        <label>RUSC1</label>
    </interactant>
    <organismsDiffer>false</organismsDiffer>
    <experiments>3</experiments>
</comment>
<comment type="interaction">
    <interactant intactId="EBI-1048945">
        <id>Q3LI72</id>
    </interactant>
    <interactant intactId="EBI-12000762">
        <id>Q7Z5V6-2</id>
        <label>SAXO4</label>
    </interactant>
    <organismsDiffer>false</organismsDiffer>
    <experiments>3</experiments>
</comment>
<comment type="interaction">
    <interactant intactId="EBI-1048945">
        <id>Q3LI72</id>
    </interactant>
    <interactant intactId="EBI-11017428">
        <id>Q13214-2</id>
        <label>SEMA3B</label>
    </interactant>
    <organismsDiffer>false</organismsDiffer>
    <experiments>3</experiments>
</comment>
<comment type="interaction">
    <interactant intactId="EBI-1048945">
        <id>Q3LI72</id>
    </interactant>
    <interactant intactId="EBI-395421">
        <id>Q16637</id>
        <label>SMN2</label>
    </interactant>
    <organismsDiffer>false</organismsDiffer>
    <experiments>3</experiments>
</comment>
<comment type="interaction">
    <interactant intactId="EBI-1048945">
        <id>Q3LI72</id>
    </interactant>
    <interactant intactId="EBI-766589">
        <id>P09234</id>
        <label>SNRPC</label>
    </interactant>
    <organismsDiffer>false</organismsDiffer>
    <experiments>3</experiments>
</comment>
<comment type="interaction">
    <interactant intactId="EBI-1048945">
        <id>Q3LI72</id>
    </interactant>
    <interactant intactId="EBI-12288855">
        <id>Q5JUK2</id>
        <label>SOHLH1</label>
    </interactant>
    <organismsDiffer>false</organismsDiffer>
    <experiments>3</experiments>
</comment>
<comment type="interaction">
    <interactant intactId="EBI-1048945">
        <id>Q3LI72</id>
    </interactant>
    <interactant intactId="EBI-10269322">
        <id>Q8NCR6</id>
        <label>SPMIP6</label>
    </interactant>
    <organismsDiffer>false</organismsDiffer>
    <experiments>3</experiments>
</comment>
<comment type="interaction">
    <interactant intactId="EBI-1048945">
        <id>Q3LI72</id>
    </interactant>
    <interactant intactId="EBI-743976">
        <id>Q96LM6</id>
        <label>SPMIP9</label>
    </interactant>
    <organismsDiffer>false</organismsDiffer>
    <experiments>3</experiments>
</comment>
<comment type="interaction">
    <interactant intactId="EBI-1048945">
        <id>Q3LI72</id>
    </interactant>
    <interactant intactId="EBI-11746252">
        <id>Q9NQB0-10</id>
        <label>TCF7L2</label>
    </interactant>
    <organismsDiffer>false</organismsDiffer>
    <experiments>3</experiments>
</comment>
<comment type="interaction">
    <interactant intactId="EBI-1048945">
        <id>Q3LI72</id>
    </interactant>
    <interactant intactId="EBI-8644516">
        <id>Q9BXF9</id>
        <label>TEKT3</label>
    </interactant>
    <organismsDiffer>false</organismsDiffer>
    <experiments>3</experiments>
</comment>
<comment type="interaction">
    <interactant intactId="EBI-1048945">
        <id>Q3LI72</id>
    </interactant>
    <interactant intactId="EBI-11741437">
        <id>Q08117-2</id>
        <label>TLE5</label>
    </interactant>
    <organismsDiffer>false</organismsDiffer>
    <experiments>3</experiments>
</comment>
<comment type="interaction">
    <interactant intactId="EBI-1048945">
        <id>Q3LI72</id>
    </interactant>
    <interactant intactId="EBI-357849">
        <id>Q15025</id>
        <label>TNIP1</label>
    </interactant>
    <organismsDiffer>false</organismsDiffer>
    <experiments>3</experiments>
</comment>
<comment type="interaction">
    <interactant intactId="EBI-1048945">
        <id>Q3LI72</id>
    </interactant>
    <interactant intactId="EBI-12023322">
        <id>Q8N831</id>
        <label>TSPYL6</label>
    </interactant>
    <organismsDiffer>false</organismsDiffer>
    <experiments>3</experiments>
</comment>
<comment type="interaction">
    <interactant intactId="EBI-1048945">
        <id>Q3LI72</id>
    </interactant>
    <interactant intactId="EBI-947187">
        <id>Q9UHD9</id>
        <label>UBQLN2</label>
    </interactant>
    <organismsDiffer>false</organismsDiffer>
    <experiments>3</experiments>
</comment>
<comment type="interaction">
    <interactant intactId="EBI-1048945">
        <id>Q3LI72</id>
    </interactant>
    <interactant intactId="EBI-2107455">
        <id>Q08AM6</id>
        <label>VAC14</label>
    </interactant>
    <organismsDiffer>false</organismsDiffer>
    <experiments>6</experiments>
</comment>
<comment type="interaction">
    <interactant intactId="EBI-1048945">
        <id>Q3LI72</id>
    </interactant>
    <interactant intactId="EBI-11980193">
        <id>Q14119</id>
        <label>VEZF1</label>
    </interactant>
    <organismsDiffer>false</organismsDiffer>
    <experiments>3</experiments>
</comment>
<comment type="interaction">
    <interactant intactId="EBI-1048945">
        <id>Q3LI72</id>
    </interactant>
    <interactant intactId="EBI-2559305">
        <id>A5D8V6</id>
        <label>VPS37C</label>
    </interactant>
    <organismsDiffer>false</organismsDiffer>
    <experiments>3</experiments>
</comment>
<comment type="interaction">
    <interactant intactId="EBI-1048945">
        <id>Q3LI72</id>
    </interactant>
    <interactant intactId="EBI-10188476">
        <id>A0A0C4DGF1</id>
        <label>ZBTB32</label>
    </interactant>
    <organismsDiffer>false</organismsDiffer>
    <experiments>5</experiments>
</comment>
<comment type="interaction">
    <interactant intactId="EBI-1048945">
        <id>Q3LI72</id>
    </interactant>
    <interactant intactId="EBI-11963196">
        <id>Q15915</id>
        <label>ZIC1</label>
    </interactant>
    <organismsDiffer>false</organismsDiffer>
    <experiments>3</experiments>
</comment>
<comment type="interaction">
    <interactant intactId="EBI-1048945">
        <id>Q3LI72</id>
    </interactant>
    <interactant intactId="EBI-744257">
        <id>Q96IQ9</id>
        <label>ZNF414</label>
    </interactant>
    <organismsDiffer>false</organismsDiffer>
    <experiments>5</experiments>
</comment>
<comment type="similarity">
    <text evidence="2">Belongs to the KRTAP type 19 family.</text>
</comment>
<reference key="1">
    <citation type="submission" date="2002-11" db="EMBL/GenBank/DDBJ databases">
        <title>Identification of complete keratin-associated protein (KAP) gene cluster spanning 800 kb region on human chromosome 21q22.11.</title>
        <authorList>
            <person name="Obayashi I."/>
            <person name="Shibuya K."/>
            <person name="Minoshima S."/>
            <person name="Kudoh J."/>
            <person name="Shimizu N."/>
        </authorList>
    </citation>
    <scope>NUCLEOTIDE SEQUENCE [MRNA]</scope>
    <source>
        <tissue>Hair root</tissue>
    </source>
</reference>
<reference key="2">
    <citation type="journal article" date="2004" name="Genome Res.">
        <title>The status, quality, and expansion of the NIH full-length cDNA project: the Mammalian Gene Collection (MGC).</title>
        <authorList>
            <consortium name="The MGC Project Team"/>
        </authorList>
    </citation>
    <scope>NUCLEOTIDE SEQUENCE [LARGE SCALE MRNA]</scope>
</reference>
<gene>
    <name type="primary">KRTAP19-5</name>
    <name type="synonym">KAP19.5</name>
</gene>
<name>KR195_HUMAN</name>
<dbReference type="EMBL" id="AB096946">
    <property type="protein sequence ID" value="BAE46361.1"/>
    <property type="molecule type" value="mRNA"/>
</dbReference>
<dbReference type="EMBL" id="BC100836">
    <property type="protein sequence ID" value="AAI00837.1"/>
    <property type="molecule type" value="mRNA"/>
</dbReference>
<dbReference type="EMBL" id="BC100837">
    <property type="protein sequence ID" value="AAI00838.1"/>
    <property type="molecule type" value="mRNA"/>
</dbReference>
<dbReference type="EMBL" id="BC100838">
    <property type="protein sequence ID" value="AAI00839.1"/>
    <property type="molecule type" value="mRNA"/>
</dbReference>
<dbReference type="EMBL" id="BC100839">
    <property type="protein sequence ID" value="AAI00840.1"/>
    <property type="molecule type" value="mRNA"/>
</dbReference>
<dbReference type="EMBL" id="BC113020">
    <property type="protein sequence ID" value="AAI13021.1"/>
    <property type="molecule type" value="mRNA"/>
</dbReference>
<dbReference type="EMBL" id="BC113021">
    <property type="protein sequence ID" value="AAI13022.1"/>
    <property type="molecule type" value="mRNA"/>
</dbReference>
<dbReference type="CCDS" id="CCDS13597.1"/>
<dbReference type="RefSeq" id="NP_853642.1">
    <property type="nucleotide sequence ID" value="NM_181611.3"/>
</dbReference>
<dbReference type="BioGRID" id="130655">
    <property type="interactions" value="103"/>
</dbReference>
<dbReference type="FunCoup" id="Q3LI72">
    <property type="interactions" value="35"/>
</dbReference>
<dbReference type="IntAct" id="Q3LI72">
    <property type="interactions" value="98"/>
</dbReference>
<dbReference type="STRING" id="9606.ENSP00000334985"/>
<dbReference type="iPTMnet" id="Q3LI72"/>
<dbReference type="PhosphoSitePlus" id="Q3LI72"/>
<dbReference type="BioMuta" id="KRTAP19-5"/>
<dbReference type="DMDM" id="88909171"/>
<dbReference type="MassIVE" id="Q3LI72"/>
<dbReference type="PaxDb" id="9606-ENSP00000334985"/>
<dbReference type="PeptideAtlas" id="Q3LI72"/>
<dbReference type="ProteomicsDB" id="61770"/>
<dbReference type="Antibodypedia" id="76478">
    <property type="antibodies" value="24 antibodies from 4 providers"/>
</dbReference>
<dbReference type="DNASU" id="337972"/>
<dbReference type="Ensembl" id="ENST00000334151.3">
    <property type="protein sequence ID" value="ENSP00000334985.2"/>
    <property type="gene ID" value="ENSG00000186977.3"/>
</dbReference>
<dbReference type="GeneID" id="337972"/>
<dbReference type="KEGG" id="hsa:337972"/>
<dbReference type="MANE-Select" id="ENST00000334151.3">
    <property type="protein sequence ID" value="ENSP00000334985.2"/>
    <property type="RefSeq nucleotide sequence ID" value="NM_181611.3"/>
    <property type="RefSeq protein sequence ID" value="NP_853642.1"/>
</dbReference>
<dbReference type="UCSC" id="uc011ada.3">
    <property type="organism name" value="human"/>
</dbReference>
<dbReference type="AGR" id="HGNC:18940"/>
<dbReference type="CTD" id="337972"/>
<dbReference type="GeneCards" id="KRTAP19-5"/>
<dbReference type="HGNC" id="HGNC:18940">
    <property type="gene designation" value="KRTAP19-5"/>
</dbReference>
<dbReference type="HPA" id="ENSG00000186977">
    <property type="expression patterns" value="Tissue enriched (skin)"/>
</dbReference>
<dbReference type="neXtProt" id="NX_Q3LI72"/>
<dbReference type="PharmGKB" id="PA134992782"/>
<dbReference type="VEuPathDB" id="HostDB:ENSG00000186977"/>
<dbReference type="eggNOG" id="ENOG502TDP7">
    <property type="taxonomic scope" value="Eukaryota"/>
</dbReference>
<dbReference type="GeneTree" id="ENSGT00940000165160"/>
<dbReference type="HOGENOM" id="CLU_184630_0_0_1"/>
<dbReference type="InParanoid" id="Q3LI72"/>
<dbReference type="OMA" id="GRFRYCC"/>
<dbReference type="PAN-GO" id="Q3LI72">
    <property type="GO annotations" value="0 GO annotations based on evolutionary models"/>
</dbReference>
<dbReference type="PathwayCommons" id="Q3LI72"/>
<dbReference type="Reactome" id="R-HSA-6805567">
    <property type="pathway name" value="Keratinization"/>
</dbReference>
<dbReference type="SignaLink" id="Q3LI72"/>
<dbReference type="BioGRID-ORCS" id="337972">
    <property type="hits" value="5 hits in 1091 CRISPR screens"/>
</dbReference>
<dbReference type="GenomeRNAi" id="337972"/>
<dbReference type="Pharos" id="Q3LI72">
    <property type="development level" value="Tdark"/>
</dbReference>
<dbReference type="PRO" id="PR:Q3LI72"/>
<dbReference type="Proteomes" id="UP000005640">
    <property type="component" value="Chromosome 21"/>
</dbReference>
<dbReference type="RNAct" id="Q3LI72">
    <property type="molecule type" value="protein"/>
</dbReference>
<dbReference type="Bgee" id="ENSG00000186977">
    <property type="expression patterns" value="Expressed in male germ line stem cell (sensu Vertebrata) in testis and 27 other cell types or tissues"/>
</dbReference>
<dbReference type="GO" id="GO:0005829">
    <property type="term" value="C:cytosol"/>
    <property type="evidence" value="ECO:0000304"/>
    <property type="project" value="Reactome"/>
</dbReference>
<dbReference type="GO" id="GO:0005882">
    <property type="term" value="C:intermediate filament"/>
    <property type="evidence" value="ECO:0007669"/>
    <property type="project" value="UniProtKB-KW"/>
</dbReference>
<dbReference type="InterPro" id="IPR021743">
    <property type="entry name" value="KRTAP_type8/19/20/21/22"/>
</dbReference>
<dbReference type="InterPro" id="IPR051528">
    <property type="entry name" value="KRTAP_type_19"/>
</dbReference>
<dbReference type="PANTHER" id="PTHR38140">
    <property type="entry name" value="KERATIN-ASSOCIATED PROTEIN 19-3-RELATED"/>
    <property type="match status" value="1"/>
</dbReference>
<dbReference type="PANTHER" id="PTHR38140:SF4">
    <property type="entry name" value="KERATIN-ASSOCIATED PROTEIN 19-5"/>
    <property type="match status" value="1"/>
</dbReference>
<dbReference type="Pfam" id="PF11759">
    <property type="entry name" value="KRTAP"/>
    <property type="match status" value="1"/>
</dbReference>
<organism>
    <name type="scientific">Homo sapiens</name>
    <name type="common">Human</name>
    <dbReference type="NCBI Taxonomy" id="9606"/>
    <lineage>
        <taxon>Eukaryota</taxon>
        <taxon>Metazoa</taxon>
        <taxon>Chordata</taxon>
        <taxon>Craniata</taxon>
        <taxon>Vertebrata</taxon>
        <taxon>Euteleostomi</taxon>
        <taxon>Mammalia</taxon>
        <taxon>Eutheria</taxon>
        <taxon>Euarchontoglires</taxon>
        <taxon>Primates</taxon>
        <taxon>Haplorrhini</taxon>
        <taxon>Catarrhini</taxon>
        <taxon>Hominidae</taxon>
        <taxon>Homo</taxon>
    </lineage>
</organism>
<evidence type="ECO:0000250" key="1"/>
<evidence type="ECO:0000305" key="2"/>
<feature type="chain" id="PRO_0000223907" description="Keratin-associated protein 19-5">
    <location>
        <begin position="1"/>
        <end position="72"/>
    </location>
</feature>
<keyword id="KW-0416">Keratin</keyword>
<keyword id="KW-1267">Proteomics identification</keyword>
<keyword id="KW-1185">Reference proteome</keyword>
<keyword id="KW-0677">Repeat</keyword>